<comment type="similarity">
    <text evidence="1">Belongs to the eukaryotic ribosomal protein eL32 family.</text>
</comment>
<feature type="chain" id="PRO_1000134021" description="Large ribosomal subunit protein eL32">
    <location>
        <begin position="1"/>
        <end position="126"/>
    </location>
</feature>
<name>RL32_THEON</name>
<sequence length="126" mass="14855">MNEKARLLRIRARLKRKKPRFLRQEWWRYPKFKNDPKWRRPKGIDSKMRLKKKGKARSPSIGWSSPRLVRGLHPSGYEEVLVHNVKELEAIDPARQAARIARTVGARKREMILARAKELGVKVLNP</sequence>
<proteinExistence type="inferred from homology"/>
<dbReference type="EMBL" id="CP000855">
    <property type="protein sequence ID" value="ACJ15568.1"/>
    <property type="molecule type" value="Genomic_DNA"/>
</dbReference>
<dbReference type="RefSeq" id="WP_012571041.1">
    <property type="nucleotide sequence ID" value="NC_011529.1"/>
</dbReference>
<dbReference type="SMR" id="B6YSN1"/>
<dbReference type="STRING" id="523850.TON_0083"/>
<dbReference type="GeneID" id="7017730"/>
<dbReference type="KEGG" id="ton:TON_0083"/>
<dbReference type="PATRIC" id="fig|523850.10.peg.83"/>
<dbReference type="eggNOG" id="arCOG00781">
    <property type="taxonomic scope" value="Archaea"/>
</dbReference>
<dbReference type="HOGENOM" id="CLU_071479_3_1_2"/>
<dbReference type="OrthoDB" id="372100at2157"/>
<dbReference type="Proteomes" id="UP000002727">
    <property type="component" value="Chromosome"/>
</dbReference>
<dbReference type="GO" id="GO:0022625">
    <property type="term" value="C:cytosolic large ribosomal subunit"/>
    <property type="evidence" value="ECO:0007669"/>
    <property type="project" value="TreeGrafter"/>
</dbReference>
<dbReference type="GO" id="GO:0003735">
    <property type="term" value="F:structural constituent of ribosome"/>
    <property type="evidence" value="ECO:0007669"/>
    <property type="project" value="InterPro"/>
</dbReference>
<dbReference type="GO" id="GO:0006412">
    <property type="term" value="P:translation"/>
    <property type="evidence" value="ECO:0007669"/>
    <property type="project" value="UniProtKB-UniRule"/>
</dbReference>
<dbReference type="CDD" id="cd00513">
    <property type="entry name" value="Ribosomal_L32_L32e"/>
    <property type="match status" value="1"/>
</dbReference>
<dbReference type="HAMAP" id="MF_00810">
    <property type="entry name" value="Ribosomal_eL32"/>
    <property type="match status" value="1"/>
</dbReference>
<dbReference type="InterPro" id="IPR001515">
    <property type="entry name" value="Ribosomal_eL32"/>
</dbReference>
<dbReference type="InterPro" id="IPR023654">
    <property type="entry name" value="Ribosomal_eL32_arc"/>
</dbReference>
<dbReference type="InterPro" id="IPR018263">
    <property type="entry name" value="Ribosomal_eL32_CS"/>
</dbReference>
<dbReference type="InterPro" id="IPR036351">
    <property type="entry name" value="Ribosomal_eL32_sf"/>
</dbReference>
<dbReference type="NCBIfam" id="NF006332">
    <property type="entry name" value="PRK08562.1"/>
    <property type="match status" value="1"/>
</dbReference>
<dbReference type="PANTHER" id="PTHR23413">
    <property type="entry name" value="60S RIBOSOMAL PROTEIN L32 AND DNA-DIRECTED RNA POLYMERASE II, SUBUNIT N"/>
    <property type="match status" value="1"/>
</dbReference>
<dbReference type="PANTHER" id="PTHR23413:SF1">
    <property type="entry name" value="RIBOSOMAL PROTEIN L32"/>
    <property type="match status" value="1"/>
</dbReference>
<dbReference type="Pfam" id="PF01655">
    <property type="entry name" value="Ribosomal_L32e"/>
    <property type="match status" value="1"/>
</dbReference>
<dbReference type="SMART" id="SM01393">
    <property type="entry name" value="Ribosomal_L32e"/>
    <property type="match status" value="1"/>
</dbReference>
<dbReference type="SUPFAM" id="SSF52042">
    <property type="entry name" value="Ribosomal protein L32e"/>
    <property type="match status" value="1"/>
</dbReference>
<dbReference type="PROSITE" id="PS00580">
    <property type="entry name" value="RIBOSOMAL_L32E"/>
    <property type="match status" value="1"/>
</dbReference>
<keyword id="KW-0687">Ribonucleoprotein</keyword>
<keyword id="KW-0689">Ribosomal protein</keyword>
<reference key="1">
    <citation type="journal article" date="2008" name="J. Bacteriol.">
        <title>The complete genome sequence of Thermococcus onnurineus NA1 reveals a mixed heterotrophic and carboxydotrophic metabolism.</title>
        <authorList>
            <person name="Lee H.S."/>
            <person name="Kang S.G."/>
            <person name="Bae S.S."/>
            <person name="Lim J.K."/>
            <person name="Cho Y."/>
            <person name="Kim Y.J."/>
            <person name="Jeon J.H."/>
            <person name="Cha S.-S."/>
            <person name="Kwon K.K."/>
            <person name="Kim H.-T."/>
            <person name="Park C.-J."/>
            <person name="Lee H.-W."/>
            <person name="Kim S.I."/>
            <person name="Chun J."/>
            <person name="Colwell R.R."/>
            <person name="Kim S.-J."/>
            <person name="Lee J.-H."/>
        </authorList>
    </citation>
    <scope>NUCLEOTIDE SEQUENCE [LARGE SCALE GENOMIC DNA]</scope>
    <source>
        <strain>NA1</strain>
    </source>
</reference>
<evidence type="ECO:0000255" key="1">
    <source>
        <dbReference type="HAMAP-Rule" id="MF_00810"/>
    </source>
</evidence>
<evidence type="ECO:0000305" key="2"/>
<organism>
    <name type="scientific">Thermococcus onnurineus (strain NA1)</name>
    <dbReference type="NCBI Taxonomy" id="523850"/>
    <lineage>
        <taxon>Archaea</taxon>
        <taxon>Methanobacteriati</taxon>
        <taxon>Methanobacteriota</taxon>
        <taxon>Thermococci</taxon>
        <taxon>Thermococcales</taxon>
        <taxon>Thermococcaceae</taxon>
        <taxon>Thermococcus</taxon>
    </lineage>
</organism>
<gene>
    <name evidence="1" type="primary">rpl32e</name>
    <name type="ordered locus">TON_0083</name>
</gene>
<accession>B6YSN1</accession>
<protein>
    <recommendedName>
        <fullName evidence="1">Large ribosomal subunit protein eL32</fullName>
    </recommendedName>
    <alternativeName>
        <fullName evidence="2">50S ribosomal protein L32e</fullName>
    </alternativeName>
</protein>